<dbReference type="EMBL" id="CP017630">
    <property type="protein sequence ID" value="AOW30889.1"/>
    <property type="molecule type" value="Genomic_DNA"/>
</dbReference>
<dbReference type="RefSeq" id="XP_717917.2">
    <property type="nucleotide sequence ID" value="XM_712824.2"/>
</dbReference>
<dbReference type="SMR" id="Q5A8A2"/>
<dbReference type="FunCoup" id="Q5A8A2">
    <property type="interactions" value="115"/>
</dbReference>
<dbReference type="STRING" id="237561.Q5A8A2"/>
<dbReference type="EnsemblFungi" id="CR_01280C_A-T">
    <property type="protein sequence ID" value="CR_01280C_A-T-p1"/>
    <property type="gene ID" value="CR_01280C_A"/>
</dbReference>
<dbReference type="GeneID" id="3640400"/>
<dbReference type="KEGG" id="cal:CAALFM_CR01280CA"/>
<dbReference type="CGD" id="CAL0000192697">
    <property type="gene designation" value="orf19.10736"/>
</dbReference>
<dbReference type="VEuPathDB" id="FungiDB:CR_01280C_A"/>
<dbReference type="eggNOG" id="KOG4680">
    <property type="taxonomic scope" value="Eukaryota"/>
</dbReference>
<dbReference type="HOGENOM" id="CLU_097982_0_1_1"/>
<dbReference type="InParanoid" id="Q5A8A2"/>
<dbReference type="OrthoDB" id="6409159at2759"/>
<dbReference type="PRO" id="PR:Q5A8A2"/>
<dbReference type="Proteomes" id="UP000000559">
    <property type="component" value="Chromosome R"/>
</dbReference>
<dbReference type="GO" id="GO:0000328">
    <property type="term" value="C:fungal-type vacuole lumen"/>
    <property type="evidence" value="ECO:0007669"/>
    <property type="project" value="EnsemblFungi"/>
</dbReference>
<dbReference type="GO" id="GO:0031210">
    <property type="term" value="F:phosphatidylcholine binding"/>
    <property type="evidence" value="ECO:0007669"/>
    <property type="project" value="EnsemblFungi"/>
</dbReference>
<dbReference type="GO" id="GO:0035091">
    <property type="term" value="F:phosphatidylinositol binding"/>
    <property type="evidence" value="ECO:0007669"/>
    <property type="project" value="EnsemblFungi"/>
</dbReference>
<dbReference type="GO" id="GO:0001786">
    <property type="term" value="F:phosphatidylserine binding"/>
    <property type="evidence" value="ECO:0007669"/>
    <property type="project" value="EnsemblFungi"/>
</dbReference>
<dbReference type="GO" id="GO:0032934">
    <property type="term" value="F:sterol binding"/>
    <property type="evidence" value="ECO:0000318"/>
    <property type="project" value="GO_Central"/>
</dbReference>
<dbReference type="GO" id="GO:0032366">
    <property type="term" value="P:intracellular sterol transport"/>
    <property type="evidence" value="ECO:0007669"/>
    <property type="project" value="EnsemblFungi"/>
</dbReference>
<dbReference type="GO" id="GO:0015918">
    <property type="term" value="P:sterol transport"/>
    <property type="evidence" value="ECO:0000318"/>
    <property type="project" value="GO_Central"/>
</dbReference>
<dbReference type="CDD" id="cd00917">
    <property type="entry name" value="PG-PI_TP"/>
    <property type="match status" value="1"/>
</dbReference>
<dbReference type="FunFam" id="2.60.40.770:FF:000004">
    <property type="entry name" value="Phosphatidylglycerol/phosphatidylinositol transfer protein"/>
    <property type="match status" value="1"/>
</dbReference>
<dbReference type="Gene3D" id="2.60.40.770">
    <property type="match status" value="1"/>
</dbReference>
<dbReference type="InterPro" id="IPR014756">
    <property type="entry name" value="Ig_E-set"/>
</dbReference>
<dbReference type="InterPro" id="IPR003172">
    <property type="entry name" value="ML_dom"/>
</dbReference>
<dbReference type="InterPro" id="IPR033917">
    <property type="entry name" value="ML_PG-PI_TP"/>
</dbReference>
<dbReference type="InterPro" id="IPR039670">
    <property type="entry name" value="NPC2-like"/>
</dbReference>
<dbReference type="PANTHER" id="PTHR11306">
    <property type="entry name" value="NIEMANN PICK TYPE C2 PROTEIN NPC2-RELATED"/>
    <property type="match status" value="1"/>
</dbReference>
<dbReference type="PANTHER" id="PTHR11306:SF0">
    <property type="entry name" value="PHOSPHATIDYLGLYCEROL_PHOSPHATIDYLINOSITOL TRANSFER PROTEIN"/>
    <property type="match status" value="1"/>
</dbReference>
<dbReference type="Pfam" id="PF02221">
    <property type="entry name" value="E1_DerP2_DerF2"/>
    <property type="match status" value="1"/>
</dbReference>
<dbReference type="SMART" id="SM00737">
    <property type="entry name" value="ML"/>
    <property type="match status" value="1"/>
</dbReference>
<dbReference type="SUPFAM" id="SSF81296">
    <property type="entry name" value="E set domains"/>
    <property type="match status" value="1"/>
</dbReference>
<comment type="function">
    <text evidence="1">Catalyzes the intermembrane transfer of phosphatidylglycerol and phosphatidylinositol.</text>
</comment>
<comment type="subunit">
    <text evidence="1">Monomer.</text>
</comment>
<comment type="similarity">
    <text evidence="3">Belongs to the NPC2 family.</text>
</comment>
<accession>Q5A8A2</accession>
<accession>A0A1D8PRW8</accession>
<proteinExistence type="inferred from homology"/>
<reference key="1">
    <citation type="journal article" date="2004" name="Proc. Natl. Acad. Sci. U.S.A.">
        <title>The diploid genome sequence of Candida albicans.</title>
        <authorList>
            <person name="Jones T."/>
            <person name="Federspiel N.A."/>
            <person name="Chibana H."/>
            <person name="Dungan J."/>
            <person name="Kalman S."/>
            <person name="Magee B.B."/>
            <person name="Newport G."/>
            <person name="Thorstenson Y.R."/>
            <person name="Agabian N."/>
            <person name="Magee P.T."/>
            <person name="Davis R.W."/>
            <person name="Scherer S."/>
        </authorList>
    </citation>
    <scope>NUCLEOTIDE SEQUENCE [LARGE SCALE GENOMIC DNA]</scope>
    <source>
        <strain>SC5314 / ATCC MYA-2876</strain>
    </source>
</reference>
<reference key="2">
    <citation type="journal article" date="2007" name="Genome Biol.">
        <title>Assembly of the Candida albicans genome into sixteen supercontigs aligned on the eight chromosomes.</title>
        <authorList>
            <person name="van het Hoog M."/>
            <person name="Rast T.J."/>
            <person name="Martchenko M."/>
            <person name="Grindle S."/>
            <person name="Dignard D."/>
            <person name="Hogues H."/>
            <person name="Cuomo C."/>
            <person name="Berriman M."/>
            <person name="Scherer S."/>
            <person name="Magee B.B."/>
            <person name="Whiteway M."/>
            <person name="Chibana H."/>
            <person name="Nantel A."/>
            <person name="Magee P.T."/>
        </authorList>
    </citation>
    <scope>GENOME REANNOTATION</scope>
    <source>
        <strain>SC5314 / ATCC MYA-2876</strain>
    </source>
</reference>
<reference key="3">
    <citation type="journal article" date="2013" name="Genome Biol.">
        <title>Assembly of a phased diploid Candida albicans genome facilitates allele-specific measurements and provides a simple model for repeat and indel structure.</title>
        <authorList>
            <person name="Muzzey D."/>
            <person name="Schwartz K."/>
            <person name="Weissman J.S."/>
            <person name="Sherlock G."/>
        </authorList>
    </citation>
    <scope>NUCLEOTIDE SEQUENCE [LARGE SCALE GENOMIC DNA]</scope>
    <scope>GENOME REANNOTATION</scope>
    <source>
        <strain>SC5314 / ATCC MYA-2876</strain>
    </source>
</reference>
<feature type="signal peptide" evidence="2">
    <location>
        <begin position="1"/>
        <end position="21"/>
    </location>
</feature>
<feature type="propeptide" id="PRO_0000019875" evidence="1">
    <location>
        <begin position="22"/>
        <end position="56"/>
    </location>
</feature>
<feature type="chain" id="PRO_0000019876" description="Phosphatidylglycerol/phosphatidylinositol transfer protein">
    <location>
        <begin position="57"/>
        <end position="192"/>
    </location>
</feature>
<sequence length="192" mass="21197">MVSFKNLAIVTLAVTTTSVEGISFSNIYLNKAITIFKNPTSLIPSFSNSKLINYQNTKPIPGDSPIEVCDASEKQLLHLDEVIVTPNPPVAGQNLTFTAVGTLDKTIEEGAYVEVEVRYGFIKLIHQTYDLCEEIVKVDLQCPIKSGKQTITKNVEIPEEVPPGKYLVVARAYTKDDEYITCLTATIIFPVQ</sequence>
<name>NPC2_CANAL</name>
<gene>
    <name type="primary">NPC2</name>
    <name type="ordered locus">CAALFM_CR01280CA</name>
    <name type="ORF">CaO19.10736</name>
    <name type="ORF">CaO19.3226</name>
</gene>
<evidence type="ECO:0000250" key="1"/>
<evidence type="ECO:0000255" key="2"/>
<evidence type="ECO:0000305" key="3"/>
<organism>
    <name type="scientific">Candida albicans (strain SC5314 / ATCC MYA-2876)</name>
    <name type="common">Yeast</name>
    <dbReference type="NCBI Taxonomy" id="237561"/>
    <lineage>
        <taxon>Eukaryota</taxon>
        <taxon>Fungi</taxon>
        <taxon>Dikarya</taxon>
        <taxon>Ascomycota</taxon>
        <taxon>Saccharomycotina</taxon>
        <taxon>Pichiomycetes</taxon>
        <taxon>Debaryomycetaceae</taxon>
        <taxon>Candida/Lodderomyces clade</taxon>
        <taxon>Candida</taxon>
    </lineage>
</organism>
<protein>
    <recommendedName>
        <fullName>Phosphatidylglycerol/phosphatidylinositol transfer protein</fullName>
        <shortName>PG/PI-TP</shortName>
    </recommendedName>
</protein>
<keyword id="KW-0445">Lipid transport</keyword>
<keyword id="KW-1185">Reference proteome</keyword>
<keyword id="KW-0732">Signal</keyword>
<keyword id="KW-0813">Transport</keyword>